<feature type="chain" id="PRO_0000251674" description="Large ribosomal subunit protein uL16">
    <location>
        <begin position="1"/>
        <end position="144"/>
    </location>
</feature>
<feature type="region of interest" description="Disordered" evidence="2">
    <location>
        <begin position="1"/>
        <end position="23"/>
    </location>
</feature>
<feature type="compositionally biased region" description="Basic residues" evidence="2">
    <location>
        <begin position="1"/>
        <end position="19"/>
    </location>
</feature>
<name>RL16_STAAB</name>
<sequence>MLLPKRVKYRRQHRPKTTGRSKGGNYVTFGEFGLQATTTSWITSRQIESARIAMTRYMKRGGKVWIKIFPHTPYTKKPLEVRMGAGKGAVEGWIAVVKPGRILFEVAGVSEEVAREALRLASHKLPVKTKFVKREELGGETNES</sequence>
<dbReference type="EMBL" id="AJ938182">
    <property type="protein sequence ID" value="CAI81804.1"/>
    <property type="molecule type" value="Genomic_DNA"/>
</dbReference>
<dbReference type="RefSeq" id="WP_000926310.1">
    <property type="nucleotide sequence ID" value="NC_007622.1"/>
</dbReference>
<dbReference type="PDB" id="6FXC">
    <property type="method" value="EM"/>
    <property type="resolution" value="6.76 A"/>
    <property type="chains" value="AK/BK=1-137"/>
</dbReference>
<dbReference type="PDBsum" id="6FXC"/>
<dbReference type="EMDB" id="EMD-0243"/>
<dbReference type="EMDB" id="EMD-3637"/>
<dbReference type="SMR" id="Q2YYQ3"/>
<dbReference type="GeneID" id="98346555"/>
<dbReference type="KEGG" id="sab:SAB2115c"/>
<dbReference type="HOGENOM" id="CLU_078858_2_1_9"/>
<dbReference type="GO" id="GO:0022625">
    <property type="term" value="C:cytosolic large ribosomal subunit"/>
    <property type="evidence" value="ECO:0007669"/>
    <property type="project" value="TreeGrafter"/>
</dbReference>
<dbReference type="GO" id="GO:0019843">
    <property type="term" value="F:rRNA binding"/>
    <property type="evidence" value="ECO:0007669"/>
    <property type="project" value="UniProtKB-UniRule"/>
</dbReference>
<dbReference type="GO" id="GO:0003735">
    <property type="term" value="F:structural constituent of ribosome"/>
    <property type="evidence" value="ECO:0007669"/>
    <property type="project" value="InterPro"/>
</dbReference>
<dbReference type="GO" id="GO:0000049">
    <property type="term" value="F:tRNA binding"/>
    <property type="evidence" value="ECO:0007669"/>
    <property type="project" value="UniProtKB-KW"/>
</dbReference>
<dbReference type="GO" id="GO:0006412">
    <property type="term" value="P:translation"/>
    <property type="evidence" value="ECO:0007669"/>
    <property type="project" value="UniProtKB-UniRule"/>
</dbReference>
<dbReference type="CDD" id="cd01433">
    <property type="entry name" value="Ribosomal_L16_L10e"/>
    <property type="match status" value="1"/>
</dbReference>
<dbReference type="FunFam" id="3.90.1170.10:FF:000001">
    <property type="entry name" value="50S ribosomal protein L16"/>
    <property type="match status" value="1"/>
</dbReference>
<dbReference type="Gene3D" id="3.90.1170.10">
    <property type="entry name" value="Ribosomal protein L10e/L16"/>
    <property type="match status" value="1"/>
</dbReference>
<dbReference type="HAMAP" id="MF_01342">
    <property type="entry name" value="Ribosomal_uL16"/>
    <property type="match status" value="1"/>
</dbReference>
<dbReference type="InterPro" id="IPR047873">
    <property type="entry name" value="Ribosomal_uL16"/>
</dbReference>
<dbReference type="InterPro" id="IPR000114">
    <property type="entry name" value="Ribosomal_uL16_bact-type"/>
</dbReference>
<dbReference type="InterPro" id="IPR020798">
    <property type="entry name" value="Ribosomal_uL16_CS"/>
</dbReference>
<dbReference type="InterPro" id="IPR016180">
    <property type="entry name" value="Ribosomal_uL16_dom"/>
</dbReference>
<dbReference type="InterPro" id="IPR036920">
    <property type="entry name" value="Ribosomal_uL16_sf"/>
</dbReference>
<dbReference type="NCBIfam" id="TIGR01164">
    <property type="entry name" value="rplP_bact"/>
    <property type="match status" value="1"/>
</dbReference>
<dbReference type="PANTHER" id="PTHR12220">
    <property type="entry name" value="50S/60S RIBOSOMAL PROTEIN L16"/>
    <property type="match status" value="1"/>
</dbReference>
<dbReference type="PANTHER" id="PTHR12220:SF13">
    <property type="entry name" value="LARGE RIBOSOMAL SUBUNIT PROTEIN UL16M"/>
    <property type="match status" value="1"/>
</dbReference>
<dbReference type="Pfam" id="PF00252">
    <property type="entry name" value="Ribosomal_L16"/>
    <property type="match status" value="1"/>
</dbReference>
<dbReference type="PRINTS" id="PR00060">
    <property type="entry name" value="RIBOSOMALL16"/>
</dbReference>
<dbReference type="SUPFAM" id="SSF54686">
    <property type="entry name" value="Ribosomal protein L16p/L10e"/>
    <property type="match status" value="1"/>
</dbReference>
<dbReference type="PROSITE" id="PS00586">
    <property type="entry name" value="RIBOSOMAL_L16_1"/>
    <property type="match status" value="1"/>
</dbReference>
<dbReference type="PROSITE" id="PS00701">
    <property type="entry name" value="RIBOSOMAL_L16_2"/>
    <property type="match status" value="1"/>
</dbReference>
<accession>Q2YYQ3</accession>
<reference key="1">
    <citation type="journal article" date="2007" name="PLoS ONE">
        <title>Molecular correlates of host specialization in Staphylococcus aureus.</title>
        <authorList>
            <person name="Herron-Olson L."/>
            <person name="Fitzgerald J.R."/>
            <person name="Musser J.M."/>
            <person name="Kapur V."/>
        </authorList>
    </citation>
    <scope>NUCLEOTIDE SEQUENCE [LARGE SCALE GENOMIC DNA]</scope>
    <source>
        <strain>bovine RF122 / ET3-1</strain>
    </source>
</reference>
<evidence type="ECO:0000255" key="1">
    <source>
        <dbReference type="HAMAP-Rule" id="MF_01342"/>
    </source>
</evidence>
<evidence type="ECO:0000256" key="2">
    <source>
        <dbReference type="SAM" id="MobiDB-lite"/>
    </source>
</evidence>
<evidence type="ECO:0000305" key="3"/>
<organism>
    <name type="scientific">Staphylococcus aureus (strain bovine RF122 / ET3-1)</name>
    <dbReference type="NCBI Taxonomy" id="273036"/>
    <lineage>
        <taxon>Bacteria</taxon>
        <taxon>Bacillati</taxon>
        <taxon>Bacillota</taxon>
        <taxon>Bacilli</taxon>
        <taxon>Bacillales</taxon>
        <taxon>Staphylococcaceae</taxon>
        <taxon>Staphylococcus</taxon>
    </lineage>
</organism>
<comment type="function">
    <text evidence="1">Binds 23S rRNA and is also seen to make contacts with the A and possibly P site tRNAs.</text>
</comment>
<comment type="subunit">
    <text evidence="1">Part of the 50S ribosomal subunit.</text>
</comment>
<comment type="similarity">
    <text evidence="1">Belongs to the universal ribosomal protein uL16 family.</text>
</comment>
<keyword id="KW-0002">3D-structure</keyword>
<keyword id="KW-0687">Ribonucleoprotein</keyword>
<keyword id="KW-0689">Ribosomal protein</keyword>
<keyword id="KW-0694">RNA-binding</keyword>
<keyword id="KW-0699">rRNA-binding</keyword>
<keyword id="KW-0820">tRNA-binding</keyword>
<protein>
    <recommendedName>
        <fullName evidence="1">Large ribosomal subunit protein uL16</fullName>
    </recommendedName>
    <alternativeName>
        <fullName evidence="3">50S ribosomal protein L16</fullName>
    </alternativeName>
</protein>
<proteinExistence type="evidence at protein level"/>
<gene>
    <name evidence="1" type="primary">rplP</name>
    <name type="ordered locus">SAB2115c</name>
</gene>